<name>GCSP_GLUOX</name>
<comment type="function">
    <text evidence="1">The glycine cleavage system catalyzes the degradation of glycine. The P protein binds the alpha-amino group of glycine through its pyridoxal phosphate cofactor; CO(2) is released and the remaining methylamine moiety is then transferred to the lipoamide cofactor of the H protein.</text>
</comment>
<comment type="catalytic activity">
    <reaction evidence="1">
        <text>N(6)-[(R)-lipoyl]-L-lysyl-[glycine-cleavage complex H protein] + glycine + H(+) = N(6)-[(R)-S(8)-aminomethyldihydrolipoyl]-L-lysyl-[glycine-cleavage complex H protein] + CO2</text>
        <dbReference type="Rhea" id="RHEA:24304"/>
        <dbReference type="Rhea" id="RHEA-COMP:10494"/>
        <dbReference type="Rhea" id="RHEA-COMP:10495"/>
        <dbReference type="ChEBI" id="CHEBI:15378"/>
        <dbReference type="ChEBI" id="CHEBI:16526"/>
        <dbReference type="ChEBI" id="CHEBI:57305"/>
        <dbReference type="ChEBI" id="CHEBI:83099"/>
        <dbReference type="ChEBI" id="CHEBI:83143"/>
        <dbReference type="EC" id="1.4.4.2"/>
    </reaction>
</comment>
<comment type="cofactor">
    <cofactor evidence="1">
        <name>pyridoxal 5'-phosphate</name>
        <dbReference type="ChEBI" id="CHEBI:597326"/>
    </cofactor>
</comment>
<comment type="subunit">
    <text evidence="1">The glycine cleavage system is composed of four proteins: P, T, L and H.</text>
</comment>
<comment type="similarity">
    <text evidence="1">Belongs to the GcvP family.</text>
</comment>
<evidence type="ECO:0000255" key="1">
    <source>
        <dbReference type="HAMAP-Rule" id="MF_00711"/>
    </source>
</evidence>
<proteinExistence type="inferred from homology"/>
<dbReference type="EC" id="1.4.4.2" evidence="1"/>
<dbReference type="EMBL" id="CP000009">
    <property type="protein sequence ID" value="AAW60866.1"/>
    <property type="molecule type" value="Genomic_DNA"/>
</dbReference>
<dbReference type="RefSeq" id="WP_011252658.1">
    <property type="nucleotide sequence ID" value="NC_006677.1"/>
</dbReference>
<dbReference type="SMR" id="Q5FRY0"/>
<dbReference type="STRING" id="290633.GOX1097"/>
<dbReference type="KEGG" id="gox:GOX1097"/>
<dbReference type="eggNOG" id="COG0403">
    <property type="taxonomic scope" value="Bacteria"/>
</dbReference>
<dbReference type="eggNOG" id="COG1003">
    <property type="taxonomic scope" value="Bacteria"/>
</dbReference>
<dbReference type="HOGENOM" id="CLU_004620_1_1_5"/>
<dbReference type="Proteomes" id="UP000006375">
    <property type="component" value="Chromosome"/>
</dbReference>
<dbReference type="GO" id="GO:0005829">
    <property type="term" value="C:cytosol"/>
    <property type="evidence" value="ECO:0007669"/>
    <property type="project" value="TreeGrafter"/>
</dbReference>
<dbReference type="GO" id="GO:0005960">
    <property type="term" value="C:glycine cleavage complex"/>
    <property type="evidence" value="ECO:0007669"/>
    <property type="project" value="TreeGrafter"/>
</dbReference>
<dbReference type="GO" id="GO:0016594">
    <property type="term" value="F:glycine binding"/>
    <property type="evidence" value="ECO:0007669"/>
    <property type="project" value="TreeGrafter"/>
</dbReference>
<dbReference type="GO" id="GO:0004375">
    <property type="term" value="F:glycine dehydrogenase (decarboxylating) activity"/>
    <property type="evidence" value="ECO:0007669"/>
    <property type="project" value="UniProtKB-EC"/>
</dbReference>
<dbReference type="GO" id="GO:0030170">
    <property type="term" value="F:pyridoxal phosphate binding"/>
    <property type="evidence" value="ECO:0007669"/>
    <property type="project" value="TreeGrafter"/>
</dbReference>
<dbReference type="GO" id="GO:0019464">
    <property type="term" value="P:glycine decarboxylation via glycine cleavage system"/>
    <property type="evidence" value="ECO:0007669"/>
    <property type="project" value="UniProtKB-UniRule"/>
</dbReference>
<dbReference type="CDD" id="cd00613">
    <property type="entry name" value="GDC-P"/>
    <property type="match status" value="2"/>
</dbReference>
<dbReference type="FunFam" id="3.40.640.10:FF:000005">
    <property type="entry name" value="Glycine dehydrogenase (decarboxylating), mitochondrial"/>
    <property type="match status" value="1"/>
</dbReference>
<dbReference type="FunFam" id="3.90.1150.10:FF:000007">
    <property type="entry name" value="Glycine dehydrogenase (decarboxylating), mitochondrial"/>
    <property type="match status" value="1"/>
</dbReference>
<dbReference type="FunFam" id="3.40.640.10:FF:000007">
    <property type="entry name" value="glycine dehydrogenase (Decarboxylating), mitochondrial"/>
    <property type="match status" value="1"/>
</dbReference>
<dbReference type="Gene3D" id="3.90.1150.10">
    <property type="entry name" value="Aspartate Aminotransferase, domain 1"/>
    <property type="match status" value="2"/>
</dbReference>
<dbReference type="Gene3D" id="3.40.640.10">
    <property type="entry name" value="Type I PLP-dependent aspartate aminotransferase-like (Major domain)"/>
    <property type="match status" value="2"/>
</dbReference>
<dbReference type="HAMAP" id="MF_00711">
    <property type="entry name" value="GcvP"/>
    <property type="match status" value="1"/>
</dbReference>
<dbReference type="InterPro" id="IPR003437">
    <property type="entry name" value="GcvP"/>
</dbReference>
<dbReference type="InterPro" id="IPR049316">
    <property type="entry name" value="GDC-P_C"/>
</dbReference>
<dbReference type="InterPro" id="IPR049315">
    <property type="entry name" value="GDC-P_N"/>
</dbReference>
<dbReference type="InterPro" id="IPR020581">
    <property type="entry name" value="GDC_P"/>
</dbReference>
<dbReference type="InterPro" id="IPR015424">
    <property type="entry name" value="PyrdxlP-dep_Trfase"/>
</dbReference>
<dbReference type="InterPro" id="IPR015421">
    <property type="entry name" value="PyrdxlP-dep_Trfase_major"/>
</dbReference>
<dbReference type="InterPro" id="IPR015422">
    <property type="entry name" value="PyrdxlP-dep_Trfase_small"/>
</dbReference>
<dbReference type="NCBIfam" id="TIGR00461">
    <property type="entry name" value="gcvP"/>
    <property type="match status" value="1"/>
</dbReference>
<dbReference type="NCBIfam" id="NF003346">
    <property type="entry name" value="PRK04366.1"/>
    <property type="match status" value="1"/>
</dbReference>
<dbReference type="PANTHER" id="PTHR11773:SF1">
    <property type="entry name" value="GLYCINE DEHYDROGENASE (DECARBOXYLATING), MITOCHONDRIAL"/>
    <property type="match status" value="1"/>
</dbReference>
<dbReference type="PANTHER" id="PTHR11773">
    <property type="entry name" value="GLYCINE DEHYDROGENASE, DECARBOXYLATING"/>
    <property type="match status" value="1"/>
</dbReference>
<dbReference type="Pfam" id="PF21478">
    <property type="entry name" value="GcvP2_C"/>
    <property type="match status" value="1"/>
</dbReference>
<dbReference type="Pfam" id="PF02347">
    <property type="entry name" value="GDC-P"/>
    <property type="match status" value="2"/>
</dbReference>
<dbReference type="SUPFAM" id="SSF53383">
    <property type="entry name" value="PLP-dependent transferases"/>
    <property type="match status" value="2"/>
</dbReference>
<feature type="chain" id="PRO_0000227105" description="Glycine dehydrogenase (decarboxylating)">
    <location>
        <begin position="1"/>
        <end position="951"/>
    </location>
</feature>
<feature type="modified residue" description="N6-(pyridoxal phosphate)lysine" evidence="1">
    <location>
        <position position="709"/>
    </location>
</feature>
<accession>Q5FRY0</accession>
<protein>
    <recommendedName>
        <fullName evidence="1">Glycine dehydrogenase (decarboxylating)</fullName>
        <ecNumber evidence="1">1.4.4.2</ecNumber>
    </recommendedName>
    <alternativeName>
        <fullName evidence="1">Glycine cleavage system P-protein</fullName>
    </alternativeName>
    <alternativeName>
        <fullName evidence="1">Glycine decarboxylase</fullName>
    </alternativeName>
    <alternativeName>
        <fullName evidence="1">Glycine dehydrogenase (aminomethyl-transferring)</fullName>
    </alternativeName>
</protein>
<gene>
    <name evidence="1" type="primary">gcvP</name>
    <name type="ordered locus">GOX1097</name>
</gene>
<keyword id="KW-0560">Oxidoreductase</keyword>
<keyword id="KW-0663">Pyridoxal phosphate</keyword>
<keyword id="KW-1185">Reference proteome</keyword>
<sequence>MPENLPVTTLWPAQTEDFSSRHIGPRPSEIGEMLRVVGASSLDDLIDKTIPAAILDRGDHGIGAALTEQDALARLRQIASRNQVLTSMIGQGYYDTVLPPVIQRNILENPAWYTAYTPYQPEISQGRLEALLNFQTLVADLTGLDIANASLLDEGTACAEAMALAQRVGKSKATAFFVDADTHPQTIAVIRTRAEPLGWDVVVGDPETDLDASSVFGALLSYPGSSGQVRDPRKVIAALHEKGAIAALACDPLALVLLESPGALGADIAIGSMQRYGVPMGAGGPHAAFMATRDAFKRHMPGRLVGVSRDSAGKPAYRLALQTREQHIRREKATSNICTAQALLAIIASMYAVYHGPEGLKAIAARTHRMAAILSAGLKTLGATVETDVFFDTITVQAGASAPQVLARAVASGINLRDAGDGRIGMSCDETTTPETIRAVWAAFAGEGADLSAIEQALDVADALPEGLSRTAPLLTHPVFHAHRSETDLLRYMRALADKDLALDRTMIPLGSCTMKLNATAEMIPITWPEFARIHPFAPADQVQGYTELFAYLERTLCAISGYDAVSLQPNSGAQGEYAGLLAIRGYHRARGDENRDVCLIPASAHGTNPASAQMAGMRVVVVACDENGNVDVEDLKAKIAQHDGRVAAIMITYPSTHGVFEERIVEICELVHAAGGQVYLDGANLNAQVGLARPGLYGADVSHFNLHKTFCIPHGGGGPGMGPIGVGKHLAPYLPGRHGIAVSAAPFGSASILPISAAYIMMMGDEGLRQATTMAILNANYIASRLEGHYPVLYRGTNGFTAHECIVDLRSLKDAVGVTVDDIAKRLIDHGFHAPTVSFPVAGTFMIEPTESEGKGELDRFCDAMIAIRAEIAEVEAGRVGMEDSPLRFAPHTTADLAGDWERSYSREAGCFPGGVDTAKYWSPVGRLDNAWGDRNLVCSCPDISTYVEG</sequence>
<organism>
    <name type="scientific">Gluconobacter oxydans (strain 621H)</name>
    <name type="common">Gluconobacter suboxydans</name>
    <dbReference type="NCBI Taxonomy" id="290633"/>
    <lineage>
        <taxon>Bacteria</taxon>
        <taxon>Pseudomonadati</taxon>
        <taxon>Pseudomonadota</taxon>
        <taxon>Alphaproteobacteria</taxon>
        <taxon>Acetobacterales</taxon>
        <taxon>Acetobacteraceae</taxon>
        <taxon>Gluconobacter</taxon>
    </lineage>
</organism>
<reference key="1">
    <citation type="journal article" date="2005" name="Nat. Biotechnol.">
        <title>Complete genome sequence of the acetic acid bacterium Gluconobacter oxydans.</title>
        <authorList>
            <person name="Prust C."/>
            <person name="Hoffmeister M."/>
            <person name="Liesegang H."/>
            <person name="Wiezer A."/>
            <person name="Fricke W.F."/>
            <person name="Ehrenreich A."/>
            <person name="Gottschalk G."/>
            <person name="Deppenmeier U."/>
        </authorList>
    </citation>
    <scope>NUCLEOTIDE SEQUENCE [LARGE SCALE GENOMIC DNA]</scope>
    <source>
        <strain>621H</strain>
    </source>
</reference>